<feature type="chain" id="PRO_0000209267" description="Bifunctional glutamine synthetase adenylyltransferase/adenylyl-removing enzyme">
    <location>
        <begin position="1"/>
        <end position="982"/>
    </location>
</feature>
<feature type="region of interest" description="Adenylyl removase" evidence="1">
    <location>
        <begin position="1"/>
        <end position="460"/>
    </location>
</feature>
<feature type="region of interest" description="Adenylyl transferase" evidence="1">
    <location>
        <begin position="473"/>
        <end position="982"/>
    </location>
</feature>
<gene>
    <name evidence="1" type="primary">glnE</name>
    <name type="ordered locus">PA5014</name>
</gene>
<organism>
    <name type="scientific">Pseudomonas aeruginosa (strain ATCC 15692 / DSM 22644 / CIP 104116 / JCM 14847 / LMG 12228 / 1C / PRS 101 / PAO1)</name>
    <dbReference type="NCBI Taxonomy" id="208964"/>
    <lineage>
        <taxon>Bacteria</taxon>
        <taxon>Pseudomonadati</taxon>
        <taxon>Pseudomonadota</taxon>
        <taxon>Gammaproteobacteria</taxon>
        <taxon>Pseudomonadales</taxon>
        <taxon>Pseudomonadaceae</taxon>
        <taxon>Pseudomonas</taxon>
    </lineage>
</organism>
<protein>
    <recommendedName>
        <fullName evidence="1">Bifunctional glutamine synthetase adenylyltransferase/adenylyl-removing enzyme</fullName>
    </recommendedName>
    <alternativeName>
        <fullName evidence="1">ATP:glutamine synthetase adenylyltransferase</fullName>
    </alternativeName>
    <alternativeName>
        <fullName evidence="1">ATase</fullName>
    </alternativeName>
    <domain>
        <recommendedName>
            <fullName evidence="1">Glutamine synthetase adenylyl-L-tyrosine phosphorylase</fullName>
            <ecNumber evidence="1">2.7.7.89</ecNumber>
        </recommendedName>
        <alternativeName>
            <fullName evidence="1">Adenylyl removase</fullName>
            <shortName evidence="1">AR</shortName>
            <shortName evidence="1">AT-N</shortName>
        </alternativeName>
    </domain>
    <domain>
        <recommendedName>
            <fullName evidence="1">Glutamine synthetase adenylyl transferase</fullName>
            <ecNumber evidence="1">2.7.7.42</ecNumber>
        </recommendedName>
        <alternativeName>
            <fullName evidence="1">Adenylyl transferase</fullName>
            <shortName evidence="1">AT</shortName>
            <shortName evidence="1">AT-C</shortName>
        </alternativeName>
    </domain>
</protein>
<reference key="1">
    <citation type="journal article" date="2000" name="Nature">
        <title>Complete genome sequence of Pseudomonas aeruginosa PAO1, an opportunistic pathogen.</title>
        <authorList>
            <person name="Stover C.K."/>
            <person name="Pham X.-Q.T."/>
            <person name="Erwin A.L."/>
            <person name="Mizoguchi S.D."/>
            <person name="Warrener P."/>
            <person name="Hickey M.J."/>
            <person name="Brinkman F.S.L."/>
            <person name="Hufnagle W.O."/>
            <person name="Kowalik D.J."/>
            <person name="Lagrou M."/>
            <person name="Garber R.L."/>
            <person name="Goltry L."/>
            <person name="Tolentino E."/>
            <person name="Westbrock-Wadman S."/>
            <person name="Yuan Y."/>
            <person name="Brody L.L."/>
            <person name="Coulter S.N."/>
            <person name="Folger K.R."/>
            <person name="Kas A."/>
            <person name="Larbig K."/>
            <person name="Lim R.M."/>
            <person name="Smith K.A."/>
            <person name="Spencer D.H."/>
            <person name="Wong G.K.-S."/>
            <person name="Wu Z."/>
            <person name="Paulsen I.T."/>
            <person name="Reizer J."/>
            <person name="Saier M.H. Jr."/>
            <person name="Hancock R.E.W."/>
            <person name="Lory S."/>
            <person name="Olson M.V."/>
        </authorList>
    </citation>
    <scope>NUCLEOTIDE SEQUENCE [LARGE SCALE GENOMIC DNA]</scope>
    <source>
        <strain>ATCC 15692 / DSM 22644 / CIP 104116 / JCM 14847 / LMG 12228 / 1C / PRS 101 / PAO1</strain>
    </source>
</reference>
<keyword id="KW-0067">ATP-binding</keyword>
<keyword id="KW-0460">Magnesium</keyword>
<keyword id="KW-0511">Multifunctional enzyme</keyword>
<keyword id="KW-0547">Nucleotide-binding</keyword>
<keyword id="KW-0548">Nucleotidyltransferase</keyword>
<keyword id="KW-1185">Reference proteome</keyword>
<keyword id="KW-0808">Transferase</keyword>
<accession>Q9HUF4</accession>
<sequence>MSLPSLANLPATLLPAAERAGTALRSAVAALDAAALARLEAWPEERLEDFRRVAAASDFVAEQAVRDSAMLLELAERGELENPHAPGELRSQLQARLEDCADEDELGRRLRRFRTRQQLRIIWRDLTRRAALAETCRDLSALADACIDLACEWLHRRQCEQFGTPIGRRSGEPQRMVVLGMGKLGAVELNLSSDIDLIFGYPEGGETEGAKRSLDNQEFFTRLGQKLIKALDAITVDGFVFRVDMRLRPYGSSGPLVYSFAALEQYYQDQGRDWERYAMIKARVVGGDQQAGEQLLGMLRPFVYRRYLDFSAIEALRTMKQLIQQEVRRKGMSENIKLGEGGIREVEFIAQAFQLIHGGRDLSLQQRPLLKVLATLEGQGYLPPAVVEELRGGYEFLRYAEHAIQALADRQTQMLPSDEYDRIRVAFIMGFASWAAFHERLSHWRARIDWHFRQVIADPDEDESGEAACGSVGAEWIPLWEEALDEESASRQLADAGFVDAEAAWKRLSDLRHGPQVRAMQRLGRERLDAFVPRLLAMTVENPQPDLVLERVLPLVEAVARRSAYLVLLTENPGALERLLTLCAASPMVAEQIARFPILLDELLNEGRLFRPPQAAELAAELRERLMRIPEDDLEQQMETLRHFKLAHGLRVAASEIAGTLPLMKVSDYLTWLAEAILVEVLELAWRQLVQRHGRPLRADGTPCDPDFVIVGYGKVGGLEFGHGSDLDLVFIHDGDPQCETDGGKSIDGAQFFTRLGQKIIHFLTAQTPSGTLYEVDMRLRPSGAAGLLVSSLGAFQRYQEQEAWTWEHQALVRARVLAGCRRVQASFEAVRAEVLARPRDLDALRTEVSEMRAKMRDNLGTRATAAGTASNAFEATAAFDLKHDAGGIVDIEFMVQYAVLAWSGEHPALLEFTDNIRILEGLERAGLIASEDVRLLQEAYKAYRAAAHRLALQKEAGVVSGEHFQTERREVIRIWRELRLG</sequence>
<evidence type="ECO:0000255" key="1">
    <source>
        <dbReference type="HAMAP-Rule" id="MF_00802"/>
    </source>
</evidence>
<name>GLNE_PSEAE</name>
<proteinExistence type="inferred from homology"/>
<comment type="function">
    <text evidence="1">Involved in the regulation of glutamine synthetase GlnA, a key enzyme in the process to assimilate ammonia. When cellular nitrogen levels are high, the C-terminal adenylyl transferase (AT) inactivates GlnA by covalent transfer of an adenylyl group from ATP to specific tyrosine residue of GlnA, thus reducing its activity. Conversely, when nitrogen levels are low, the N-terminal adenylyl removase (AR) activates GlnA by removing the adenylyl group by phosphorolysis, increasing its activity. The regulatory region of GlnE binds the signal transduction protein PII (GlnB) which indicates the nitrogen status of the cell.</text>
</comment>
<comment type="catalytic activity">
    <reaction evidence="1">
        <text>[glutamine synthetase]-O(4)-(5'-adenylyl)-L-tyrosine + phosphate = [glutamine synthetase]-L-tyrosine + ADP</text>
        <dbReference type="Rhea" id="RHEA:43716"/>
        <dbReference type="Rhea" id="RHEA-COMP:10660"/>
        <dbReference type="Rhea" id="RHEA-COMP:10661"/>
        <dbReference type="ChEBI" id="CHEBI:43474"/>
        <dbReference type="ChEBI" id="CHEBI:46858"/>
        <dbReference type="ChEBI" id="CHEBI:83624"/>
        <dbReference type="ChEBI" id="CHEBI:456216"/>
        <dbReference type="EC" id="2.7.7.89"/>
    </reaction>
</comment>
<comment type="catalytic activity">
    <reaction evidence="1">
        <text>[glutamine synthetase]-L-tyrosine + ATP = [glutamine synthetase]-O(4)-(5'-adenylyl)-L-tyrosine + diphosphate</text>
        <dbReference type="Rhea" id="RHEA:18589"/>
        <dbReference type="Rhea" id="RHEA-COMP:10660"/>
        <dbReference type="Rhea" id="RHEA-COMP:10661"/>
        <dbReference type="ChEBI" id="CHEBI:30616"/>
        <dbReference type="ChEBI" id="CHEBI:33019"/>
        <dbReference type="ChEBI" id="CHEBI:46858"/>
        <dbReference type="ChEBI" id="CHEBI:83624"/>
        <dbReference type="EC" id="2.7.7.42"/>
    </reaction>
</comment>
<comment type="cofactor">
    <cofactor evidence="1">
        <name>Mg(2+)</name>
        <dbReference type="ChEBI" id="CHEBI:18420"/>
    </cofactor>
</comment>
<comment type="similarity">
    <text evidence="1">Belongs to the GlnE family.</text>
</comment>
<dbReference type="EC" id="2.7.7.89" evidence="1"/>
<dbReference type="EC" id="2.7.7.42" evidence="1"/>
<dbReference type="EMBL" id="AE004091">
    <property type="protein sequence ID" value="AAG08399.1"/>
    <property type="molecule type" value="Genomic_DNA"/>
</dbReference>
<dbReference type="PIR" id="B83021">
    <property type="entry name" value="B83021"/>
</dbReference>
<dbReference type="RefSeq" id="NP_253701.1">
    <property type="nucleotide sequence ID" value="NC_002516.2"/>
</dbReference>
<dbReference type="RefSeq" id="WP_003114555.1">
    <property type="nucleotide sequence ID" value="NZ_QZGE01000002.1"/>
</dbReference>
<dbReference type="SMR" id="Q9HUF4"/>
<dbReference type="FunCoup" id="Q9HUF4">
    <property type="interactions" value="250"/>
</dbReference>
<dbReference type="STRING" id="208964.PA5014"/>
<dbReference type="PaxDb" id="208964-PA5014"/>
<dbReference type="GeneID" id="881325"/>
<dbReference type="KEGG" id="pae:PA5014"/>
<dbReference type="PATRIC" id="fig|208964.12.peg.5254"/>
<dbReference type="PseudoCAP" id="PA5014"/>
<dbReference type="HOGENOM" id="CLU_006233_0_1_6"/>
<dbReference type="InParanoid" id="Q9HUF4"/>
<dbReference type="OrthoDB" id="9759366at2"/>
<dbReference type="PhylomeDB" id="Q9HUF4"/>
<dbReference type="BioCyc" id="PAER208964:G1FZ6-5130-MONOMER"/>
<dbReference type="Proteomes" id="UP000002438">
    <property type="component" value="Chromosome"/>
</dbReference>
<dbReference type="GO" id="GO:0005829">
    <property type="term" value="C:cytosol"/>
    <property type="evidence" value="ECO:0000318"/>
    <property type="project" value="GO_Central"/>
</dbReference>
<dbReference type="GO" id="GO:0008882">
    <property type="term" value="F:[glutamate-ammonia-ligase] adenylyltransferase activity"/>
    <property type="evidence" value="ECO:0000318"/>
    <property type="project" value="GO_Central"/>
</dbReference>
<dbReference type="GO" id="GO:0047388">
    <property type="term" value="F:[glutamine synthetase]-adenylyl-L-tyrosine phosphorylase activity"/>
    <property type="evidence" value="ECO:0007669"/>
    <property type="project" value="UniProtKB-EC"/>
</dbReference>
<dbReference type="GO" id="GO:0005524">
    <property type="term" value="F:ATP binding"/>
    <property type="evidence" value="ECO:0007669"/>
    <property type="project" value="UniProtKB-UniRule"/>
</dbReference>
<dbReference type="GO" id="GO:0000287">
    <property type="term" value="F:magnesium ion binding"/>
    <property type="evidence" value="ECO:0007669"/>
    <property type="project" value="UniProtKB-UniRule"/>
</dbReference>
<dbReference type="GO" id="GO:0000820">
    <property type="term" value="P:regulation of glutamine family amino acid metabolic process"/>
    <property type="evidence" value="ECO:0000318"/>
    <property type="project" value="GO_Central"/>
</dbReference>
<dbReference type="CDD" id="cd05401">
    <property type="entry name" value="NT_GlnE_GlnD_like"/>
    <property type="match status" value="2"/>
</dbReference>
<dbReference type="FunFam" id="1.20.120.330:FF:000005">
    <property type="entry name" value="Bifunctional glutamine synthetase adenylyltransferase/adenylyl-removing enzyme"/>
    <property type="match status" value="1"/>
</dbReference>
<dbReference type="FunFam" id="3.30.460.10:FF:000009">
    <property type="entry name" value="Bifunctional glutamine synthetase adenylyltransferase/adenylyl-removing enzyme"/>
    <property type="match status" value="2"/>
</dbReference>
<dbReference type="Gene3D" id="1.20.120.1510">
    <property type="match status" value="1"/>
</dbReference>
<dbReference type="Gene3D" id="3.30.460.10">
    <property type="entry name" value="Beta Polymerase, domain 2"/>
    <property type="match status" value="2"/>
</dbReference>
<dbReference type="Gene3D" id="1.20.120.330">
    <property type="entry name" value="Nucleotidyltransferases domain 2"/>
    <property type="match status" value="2"/>
</dbReference>
<dbReference type="HAMAP" id="MF_00802">
    <property type="entry name" value="GlnE"/>
    <property type="match status" value="1"/>
</dbReference>
<dbReference type="InterPro" id="IPR023057">
    <property type="entry name" value="GlnE"/>
</dbReference>
<dbReference type="InterPro" id="IPR005190">
    <property type="entry name" value="GlnE_rpt_dom"/>
</dbReference>
<dbReference type="InterPro" id="IPR043519">
    <property type="entry name" value="NT_sf"/>
</dbReference>
<dbReference type="InterPro" id="IPR013546">
    <property type="entry name" value="PII_UdlTrfase/GS_AdlTrfase"/>
</dbReference>
<dbReference type="NCBIfam" id="NF008292">
    <property type="entry name" value="PRK11072.1"/>
    <property type="match status" value="1"/>
</dbReference>
<dbReference type="PANTHER" id="PTHR30621:SF0">
    <property type="entry name" value="BIFUNCTIONAL GLUTAMINE SYNTHETASE ADENYLYLTRANSFERASE_ADENYLYL-REMOVING ENZYME"/>
    <property type="match status" value="1"/>
</dbReference>
<dbReference type="PANTHER" id="PTHR30621">
    <property type="entry name" value="GLUTAMINE SYNTHETASE ADENYLYLTRANSFERASE"/>
    <property type="match status" value="1"/>
</dbReference>
<dbReference type="Pfam" id="PF08335">
    <property type="entry name" value="GlnD_UR_UTase"/>
    <property type="match status" value="2"/>
</dbReference>
<dbReference type="Pfam" id="PF03710">
    <property type="entry name" value="GlnE"/>
    <property type="match status" value="2"/>
</dbReference>
<dbReference type="SUPFAM" id="SSF81301">
    <property type="entry name" value="Nucleotidyltransferase"/>
    <property type="match status" value="2"/>
</dbReference>
<dbReference type="SUPFAM" id="SSF81593">
    <property type="entry name" value="Nucleotidyltransferase substrate binding subunit/domain"/>
    <property type="match status" value="2"/>
</dbReference>